<gene>
    <name type="primary">nagK</name>
    <name type="ordered locus">YPN_2003</name>
    <name type="ORF">YP516_2229</name>
</gene>
<organism>
    <name type="scientific">Yersinia pestis bv. Antiqua (strain Nepal516)</name>
    <dbReference type="NCBI Taxonomy" id="377628"/>
    <lineage>
        <taxon>Bacteria</taxon>
        <taxon>Pseudomonadati</taxon>
        <taxon>Pseudomonadota</taxon>
        <taxon>Gammaproteobacteria</taxon>
        <taxon>Enterobacterales</taxon>
        <taxon>Yersiniaceae</taxon>
        <taxon>Yersinia</taxon>
    </lineage>
</organism>
<protein>
    <recommendedName>
        <fullName>N-acetyl-D-glucosamine kinase</fullName>
        <ecNumber>2.7.1.59</ecNumber>
    </recommendedName>
    <alternativeName>
        <fullName>GlcNAc kinase</fullName>
    </alternativeName>
</protein>
<feature type="chain" id="PRO_0000270126" description="N-acetyl-D-glucosamine kinase">
    <location>
        <begin position="1"/>
        <end position="256"/>
    </location>
</feature>
<feature type="binding site" evidence="2">
    <location>
        <begin position="4"/>
        <end position="11"/>
    </location>
    <ligand>
        <name>ATP</name>
        <dbReference type="ChEBI" id="CHEBI:30616"/>
    </ligand>
</feature>
<feature type="binding site" evidence="2">
    <location>
        <begin position="133"/>
        <end position="140"/>
    </location>
    <ligand>
        <name>ATP</name>
        <dbReference type="ChEBI" id="CHEBI:30616"/>
    </ligand>
</feature>
<feature type="binding site" evidence="1">
    <location>
        <position position="157"/>
    </location>
    <ligand>
        <name>Zn(2+)</name>
        <dbReference type="ChEBI" id="CHEBI:29105"/>
    </ligand>
</feature>
<feature type="binding site" evidence="1">
    <location>
        <position position="177"/>
    </location>
    <ligand>
        <name>Zn(2+)</name>
        <dbReference type="ChEBI" id="CHEBI:29105"/>
    </ligand>
</feature>
<feature type="binding site" evidence="1">
    <location>
        <position position="179"/>
    </location>
    <ligand>
        <name>Zn(2+)</name>
        <dbReference type="ChEBI" id="CHEBI:29105"/>
    </ligand>
</feature>
<feature type="binding site" evidence="1">
    <location>
        <position position="184"/>
    </location>
    <ligand>
        <name>Zn(2+)</name>
        <dbReference type="ChEBI" id="CHEBI:29105"/>
    </ligand>
</feature>
<keyword id="KW-0067">ATP-binding</keyword>
<keyword id="KW-0119">Carbohydrate metabolism</keyword>
<keyword id="KW-0418">Kinase</keyword>
<keyword id="KW-0479">Metal-binding</keyword>
<keyword id="KW-0547">Nucleotide-binding</keyword>
<keyword id="KW-0808">Transferase</keyword>
<keyword id="KW-0862">Zinc</keyword>
<name>NAGK_YERPN</name>
<comment type="function">
    <text evidence="1">Catalyzes the phosphorylation of N-acetyl-D-glucosamine (GlcNAc) derived from cell-wall degradation, yielding GlcNAc-6-P.</text>
</comment>
<comment type="catalytic activity">
    <reaction>
        <text>N-acetyl-D-glucosamine + ATP = N-acetyl-D-glucosamine 6-phosphate + ADP + H(+)</text>
        <dbReference type="Rhea" id="RHEA:17417"/>
        <dbReference type="ChEBI" id="CHEBI:15378"/>
        <dbReference type="ChEBI" id="CHEBI:30616"/>
        <dbReference type="ChEBI" id="CHEBI:57513"/>
        <dbReference type="ChEBI" id="CHEBI:456216"/>
        <dbReference type="ChEBI" id="CHEBI:506227"/>
        <dbReference type="EC" id="2.7.1.59"/>
    </reaction>
</comment>
<comment type="pathway">
    <text>Cell wall biogenesis; peptidoglycan recycling.</text>
</comment>
<comment type="miscellaneous">
    <text>Might be inactive, since the sequence is shorter than in other family members, due to a probable natural frameshift in the C-terminus.</text>
</comment>
<comment type="similarity">
    <text evidence="3">Belongs to the ROK (NagC/XylR) family. NagK subfamily.</text>
</comment>
<reference key="1">
    <citation type="journal article" date="2006" name="J. Bacteriol.">
        <title>Complete genome sequence of Yersinia pestis strains Antiqua and Nepal516: evidence of gene reduction in an emerging pathogen.</title>
        <authorList>
            <person name="Chain P.S.G."/>
            <person name="Hu P."/>
            <person name="Malfatti S.A."/>
            <person name="Radnedge L."/>
            <person name="Larimer F."/>
            <person name="Vergez L.M."/>
            <person name="Worsham P."/>
            <person name="Chu M.C."/>
            <person name="Andersen G.L."/>
        </authorList>
    </citation>
    <scope>NUCLEOTIDE SEQUENCE [LARGE SCALE GENOMIC DNA]</scope>
    <source>
        <strain>Nepal516</strain>
    </source>
</reference>
<reference key="2">
    <citation type="submission" date="2009-04" db="EMBL/GenBank/DDBJ databases">
        <title>Yersinia pestis Nepal516A whole genome shotgun sequencing project.</title>
        <authorList>
            <person name="Plunkett G. III"/>
            <person name="Anderson B.D."/>
            <person name="Baumler D.J."/>
            <person name="Burland V."/>
            <person name="Cabot E.L."/>
            <person name="Glasner J.D."/>
            <person name="Mau B."/>
            <person name="Neeno-Eckwall E."/>
            <person name="Perna N.T."/>
            <person name="Munk A.C."/>
            <person name="Tapia R."/>
            <person name="Green L.D."/>
            <person name="Rogers Y.C."/>
            <person name="Detter J.C."/>
            <person name="Bruce D.C."/>
            <person name="Brettin T.S."/>
        </authorList>
    </citation>
    <scope>NUCLEOTIDE SEQUENCE [LARGE SCALE GENOMIC DNA]</scope>
    <source>
        <strain>Nepal516</strain>
    </source>
</reference>
<evidence type="ECO:0000250" key="1"/>
<evidence type="ECO:0000255" key="2"/>
<evidence type="ECO:0000305" key="3"/>
<sequence>MYYGFDMGGTKIELGVFDENLQRIWHKRVPTPREDYPQLLQILRDLTEEADTYCGVQGSVGIGIPGLPNADDGTVFTANVPSAMGQPLQADLSRLIQREVRIDNDANCFALSEAWDPEFRTYPTVLGLILGTGVGGGLIVNGSIVSGRNHITGEFGHFRLPVDALDILGADIPRVPCGCGHRGCIENYISGRGFEWMYSHFYQHTLPATDIIAHYAAGEPKAVAHVERFMDVLAVCLGNLLTMLGSPFGRGGWGVV</sequence>
<dbReference type="EC" id="2.7.1.59"/>
<dbReference type="EMBL" id="CP000305">
    <property type="protein sequence ID" value="ABG18332.1"/>
    <property type="molecule type" value="Genomic_DNA"/>
</dbReference>
<dbReference type="EMBL" id="ACNQ01000011">
    <property type="protein sequence ID" value="EEO76629.1"/>
    <property type="molecule type" value="Genomic_DNA"/>
</dbReference>
<dbReference type="SMR" id="Q1CI48"/>
<dbReference type="KEGG" id="ypn:YPN_2003"/>
<dbReference type="HOGENOM" id="CLU_036604_0_3_6"/>
<dbReference type="UniPathway" id="UPA00544"/>
<dbReference type="Proteomes" id="UP000008936">
    <property type="component" value="Chromosome"/>
</dbReference>
<dbReference type="GO" id="GO:0005524">
    <property type="term" value="F:ATP binding"/>
    <property type="evidence" value="ECO:0007669"/>
    <property type="project" value="UniProtKB-KW"/>
</dbReference>
<dbReference type="GO" id="GO:0046872">
    <property type="term" value="F:metal ion binding"/>
    <property type="evidence" value="ECO:0007669"/>
    <property type="project" value="UniProtKB-KW"/>
</dbReference>
<dbReference type="GO" id="GO:0045127">
    <property type="term" value="F:N-acetylglucosamine kinase activity"/>
    <property type="evidence" value="ECO:0007669"/>
    <property type="project" value="UniProtKB-EC"/>
</dbReference>
<dbReference type="GO" id="GO:0009254">
    <property type="term" value="P:peptidoglycan turnover"/>
    <property type="evidence" value="ECO:0007669"/>
    <property type="project" value="UniProtKB-UniPathway"/>
</dbReference>
<dbReference type="CDD" id="cd24057">
    <property type="entry name" value="ASKHA_NBD_ROK_NAGK"/>
    <property type="match status" value="1"/>
</dbReference>
<dbReference type="FunFam" id="3.30.420.40:FF:000049">
    <property type="entry name" value="N-acetyl-D-glucosamine kinase"/>
    <property type="match status" value="1"/>
</dbReference>
<dbReference type="Gene3D" id="3.30.420.40">
    <property type="match status" value="2"/>
</dbReference>
<dbReference type="InterPro" id="IPR043129">
    <property type="entry name" value="ATPase_NBD"/>
</dbReference>
<dbReference type="InterPro" id="IPR000600">
    <property type="entry name" value="ROK"/>
</dbReference>
<dbReference type="InterPro" id="IPR049874">
    <property type="entry name" value="ROK_cs"/>
</dbReference>
<dbReference type="NCBIfam" id="NF009835">
    <property type="entry name" value="PRK13310.1"/>
    <property type="match status" value="1"/>
</dbReference>
<dbReference type="NCBIfam" id="NF009836">
    <property type="entry name" value="PRK13311.1"/>
    <property type="match status" value="1"/>
</dbReference>
<dbReference type="PANTHER" id="PTHR18964:SF162">
    <property type="entry name" value="N-ACETYL-D-GLUCOSAMINE KINASE"/>
    <property type="match status" value="1"/>
</dbReference>
<dbReference type="PANTHER" id="PTHR18964">
    <property type="entry name" value="ROK (REPRESSOR, ORF, KINASE) FAMILY"/>
    <property type="match status" value="1"/>
</dbReference>
<dbReference type="Pfam" id="PF00480">
    <property type="entry name" value="ROK"/>
    <property type="match status" value="1"/>
</dbReference>
<dbReference type="SUPFAM" id="SSF53067">
    <property type="entry name" value="Actin-like ATPase domain"/>
    <property type="match status" value="1"/>
</dbReference>
<dbReference type="PROSITE" id="PS01125">
    <property type="entry name" value="ROK"/>
    <property type="match status" value="1"/>
</dbReference>
<proteinExistence type="inferred from homology"/>
<accession>Q1CI48</accession>
<accession>C4GTW5</accession>